<accession>P08925</accession>
<keyword id="KW-0004">4Fe-4S</keyword>
<keyword id="KW-0013">ADP-ribosylation</keyword>
<keyword id="KW-0067">ATP-binding</keyword>
<keyword id="KW-0408">Iron</keyword>
<keyword id="KW-0411">Iron-sulfur</keyword>
<keyword id="KW-0479">Metal-binding</keyword>
<keyword id="KW-0535">Nitrogen fixation</keyword>
<keyword id="KW-0547">Nucleotide-binding</keyword>
<keyword id="KW-0560">Oxidoreductase</keyword>
<protein>
    <recommendedName>
        <fullName>Nitrogenase iron protein</fullName>
        <ecNumber>1.18.6.1</ecNumber>
    </recommendedName>
    <alternativeName>
        <fullName>Nitrogenase Fe protein</fullName>
    </alternativeName>
    <alternativeName>
        <fullName>Nitrogenase component II</fullName>
    </alternativeName>
    <alternativeName>
        <fullName>Nitrogenase reductase</fullName>
    </alternativeName>
</protein>
<feature type="chain" id="PRO_0000139507" description="Nitrogenase iron protein">
    <location>
        <begin position="1"/>
        <end position="287"/>
    </location>
</feature>
<feature type="binding site" evidence="2">
    <location>
        <begin position="8"/>
        <end position="15"/>
    </location>
    <ligand>
        <name>ATP</name>
        <dbReference type="ChEBI" id="CHEBI:30616"/>
    </ligand>
</feature>
<feature type="binding site" evidence="1">
    <location>
        <position position="96"/>
    </location>
    <ligand>
        <name>[4Fe-4S] cluster</name>
        <dbReference type="ChEBI" id="CHEBI:49883"/>
        <note>ligand shared between dimeric partners</note>
    </ligand>
</feature>
<feature type="binding site" evidence="1">
    <location>
        <position position="130"/>
    </location>
    <ligand>
        <name>[4Fe-4S] cluster</name>
        <dbReference type="ChEBI" id="CHEBI:49883"/>
        <note>ligand shared between dimeric partners</note>
    </ligand>
</feature>
<feature type="modified residue" description="ADP-ribosylarginine; by dinitrogenase reductase ADP-ribosyltransferase" evidence="1">
    <location>
        <position position="99"/>
    </location>
</feature>
<comment type="function">
    <text evidence="1">The key enzymatic reactions in nitrogen fixation are catalyzed by the nitrogenase complex, which has 2 components: the iron protein and the molybdenum-iron protein.</text>
</comment>
<comment type="catalytic activity">
    <reaction>
        <text>N2 + 8 reduced [2Fe-2S]-[ferredoxin] + 16 ATP + 16 H2O = H2 + 8 oxidized [2Fe-2S]-[ferredoxin] + 2 NH4(+) + 16 ADP + 16 phosphate + 6 H(+)</text>
        <dbReference type="Rhea" id="RHEA:21448"/>
        <dbReference type="Rhea" id="RHEA-COMP:10000"/>
        <dbReference type="Rhea" id="RHEA-COMP:10001"/>
        <dbReference type="ChEBI" id="CHEBI:15377"/>
        <dbReference type="ChEBI" id="CHEBI:15378"/>
        <dbReference type="ChEBI" id="CHEBI:17997"/>
        <dbReference type="ChEBI" id="CHEBI:18276"/>
        <dbReference type="ChEBI" id="CHEBI:28938"/>
        <dbReference type="ChEBI" id="CHEBI:30616"/>
        <dbReference type="ChEBI" id="CHEBI:33737"/>
        <dbReference type="ChEBI" id="CHEBI:33738"/>
        <dbReference type="ChEBI" id="CHEBI:43474"/>
        <dbReference type="ChEBI" id="CHEBI:456216"/>
        <dbReference type="EC" id="1.18.6.1"/>
    </reaction>
</comment>
<comment type="cofactor">
    <cofactor evidence="1">
        <name>[4Fe-4S] cluster</name>
        <dbReference type="ChEBI" id="CHEBI:49883"/>
    </cofactor>
    <text evidence="1">Binds 1 [4Fe-4S] cluster per dimer.</text>
</comment>
<comment type="subunit">
    <text evidence="1">Homodimer.</text>
</comment>
<comment type="PTM">
    <text evidence="1">The reversible ADP-ribosylation of Arg-99 inactivates the nitrogenase reductase and regulates nitrogenase activity.</text>
</comment>
<comment type="similarity">
    <text evidence="3">Belongs to the NifH/BchL/ChlL family.</text>
</comment>
<organism>
    <name type="scientific">Frankia alni</name>
    <dbReference type="NCBI Taxonomy" id="1859"/>
    <lineage>
        <taxon>Bacteria</taxon>
        <taxon>Bacillati</taxon>
        <taxon>Actinomycetota</taxon>
        <taxon>Actinomycetes</taxon>
        <taxon>Frankiales</taxon>
        <taxon>Frankiaceae</taxon>
        <taxon>Frankia</taxon>
    </lineage>
</organism>
<name>NIFH_FRAAL</name>
<gene>
    <name type="primary">nifH</name>
</gene>
<evidence type="ECO:0000250" key="1"/>
<evidence type="ECO:0000255" key="2"/>
<evidence type="ECO:0000305" key="3"/>
<reference key="1">
    <citation type="journal article" date="1988" name="Mol. Gen. Genet.">
        <title>Conservation of nif sequences in Frankia.</title>
        <authorList>
            <person name="Normand P."/>
            <person name="Simonet P."/>
            <person name="Bardin R."/>
        </authorList>
    </citation>
    <scope>NUCLEOTIDE SEQUENCE [GENOMIC DNA]</scope>
    <source>
        <strain>ARI3</strain>
    </source>
</reference>
<reference key="2">
    <citation type="submission" date="1996-04" db="EMBL/GenBank/DDBJ databases">
        <authorList>
            <person name="Specq A."/>
            <person name="Normand P."/>
        </authorList>
    </citation>
    <scope>NUCLEOTIDE SEQUENCE [GENOMIC DNA]</scope>
    <source>
        <strain>ARI3</strain>
    </source>
</reference>
<dbReference type="EC" id="1.18.6.1"/>
<dbReference type="EMBL" id="X57006">
    <property type="protein sequence ID" value="CAA40326.1"/>
    <property type="molecule type" value="Genomic_DNA"/>
</dbReference>
<dbReference type="EMBL" id="L41344">
    <property type="protein sequence ID" value="AAA96262.1"/>
    <property type="molecule type" value="Genomic_DNA"/>
</dbReference>
<dbReference type="SMR" id="P08925"/>
<dbReference type="GO" id="GO:0051539">
    <property type="term" value="F:4 iron, 4 sulfur cluster binding"/>
    <property type="evidence" value="ECO:0007669"/>
    <property type="project" value="UniProtKB-KW"/>
</dbReference>
<dbReference type="GO" id="GO:0005524">
    <property type="term" value="F:ATP binding"/>
    <property type="evidence" value="ECO:0007669"/>
    <property type="project" value="UniProtKB-UniRule"/>
</dbReference>
<dbReference type="GO" id="GO:0046872">
    <property type="term" value="F:metal ion binding"/>
    <property type="evidence" value="ECO:0007669"/>
    <property type="project" value="UniProtKB-KW"/>
</dbReference>
<dbReference type="GO" id="GO:0016163">
    <property type="term" value="F:nitrogenase activity"/>
    <property type="evidence" value="ECO:0007669"/>
    <property type="project" value="UniProtKB-UniRule"/>
</dbReference>
<dbReference type="GO" id="GO:0009399">
    <property type="term" value="P:nitrogen fixation"/>
    <property type="evidence" value="ECO:0007669"/>
    <property type="project" value="UniProtKB-UniRule"/>
</dbReference>
<dbReference type="CDD" id="cd02040">
    <property type="entry name" value="NifH"/>
    <property type="match status" value="1"/>
</dbReference>
<dbReference type="FunFam" id="3.40.50.300:FF:001379">
    <property type="entry name" value="Nitrogenase iron protein 1"/>
    <property type="match status" value="1"/>
</dbReference>
<dbReference type="Gene3D" id="3.40.50.300">
    <property type="entry name" value="P-loop containing nucleotide triphosphate hydrolases"/>
    <property type="match status" value="1"/>
</dbReference>
<dbReference type="HAMAP" id="MF_00533">
    <property type="entry name" value="NifH"/>
    <property type="match status" value="1"/>
</dbReference>
<dbReference type="InterPro" id="IPR030655">
    <property type="entry name" value="NifH/chlL_CS"/>
</dbReference>
<dbReference type="InterPro" id="IPR000392">
    <property type="entry name" value="NifH/frxC"/>
</dbReference>
<dbReference type="InterPro" id="IPR005977">
    <property type="entry name" value="Nitrogenase_Fe_NifH"/>
</dbReference>
<dbReference type="InterPro" id="IPR027417">
    <property type="entry name" value="P-loop_NTPase"/>
</dbReference>
<dbReference type="NCBIfam" id="TIGR01287">
    <property type="entry name" value="nifH"/>
    <property type="match status" value="1"/>
</dbReference>
<dbReference type="PANTHER" id="PTHR42864">
    <property type="entry name" value="LIGHT-INDEPENDENT PROTOCHLOROPHYLLIDE REDUCTASE IRON-SULFUR ATP-BINDING PROTEIN"/>
    <property type="match status" value="1"/>
</dbReference>
<dbReference type="PANTHER" id="PTHR42864:SF2">
    <property type="entry name" value="LIGHT-INDEPENDENT PROTOCHLOROPHYLLIDE REDUCTASE IRON-SULFUR ATP-BINDING PROTEIN"/>
    <property type="match status" value="1"/>
</dbReference>
<dbReference type="Pfam" id="PF00142">
    <property type="entry name" value="Fer4_NifH"/>
    <property type="match status" value="1"/>
</dbReference>
<dbReference type="PIRSF" id="PIRSF000363">
    <property type="entry name" value="Nitrogenase_iron"/>
    <property type="match status" value="1"/>
</dbReference>
<dbReference type="PRINTS" id="PR00091">
    <property type="entry name" value="NITROGNASEII"/>
</dbReference>
<dbReference type="SUPFAM" id="SSF52540">
    <property type="entry name" value="P-loop containing nucleoside triphosphate hydrolases"/>
    <property type="match status" value="1"/>
</dbReference>
<dbReference type="PROSITE" id="PS00746">
    <property type="entry name" value="NIFH_FRXC_1"/>
    <property type="match status" value="1"/>
</dbReference>
<dbReference type="PROSITE" id="PS00692">
    <property type="entry name" value="NIFH_FRXC_2"/>
    <property type="match status" value="1"/>
</dbReference>
<dbReference type="PROSITE" id="PS51026">
    <property type="entry name" value="NIFH_FRXC_3"/>
    <property type="match status" value="1"/>
</dbReference>
<proteinExistence type="inferred from homology"/>
<sequence>MRQIAFYGKGGIGKSTTQQNTMAAMAEMGQRVMIVGCDPKADSTRLILHSKAQTSVIQLAAEKGSVEDLELDEVLVEGQWGIKCVESGGPEPGVGCAGRGVITSITYLEEAGAYENLDFVTYDVLGDVVCGGFAMPIRQGKAQEIYIVTSGEMMAMYAANNIARGILKYAHSGGVRLGGLICNSRKTDREDELIMELARRLNTQMIHFIPRNNVVQHAELRRMTVIEYDPKNSQADEYRQLANKIVNNDMKTIPTPITMDELEELLIDFGIMAQEDESVIGKAAAVA</sequence>